<geneLocation type="plasmid">
    <name>sym pNGR234a</name>
</geneLocation>
<evidence type="ECO:0000255" key="1">
    <source>
        <dbReference type="PROSITE-ProRule" id="PRU00441"/>
    </source>
</evidence>
<evidence type="ECO:0000305" key="2"/>
<gene>
    <name type="ordered locus">NGR_a03680</name>
    <name type="ORF">y4fN</name>
</gene>
<keyword id="KW-0997">Cell inner membrane</keyword>
<keyword id="KW-1003">Cell membrane</keyword>
<keyword id="KW-0472">Membrane</keyword>
<keyword id="KW-0614">Plasmid</keyword>
<keyword id="KW-1185">Reference proteome</keyword>
<keyword id="KW-0677">Repeat</keyword>
<keyword id="KW-0812">Transmembrane</keyword>
<keyword id="KW-1133">Transmembrane helix</keyword>
<keyword id="KW-0813">Transport</keyword>
<protein>
    <recommendedName>
        <fullName>Probable ABC transporter permease protein y4fN</fullName>
    </recommendedName>
</protein>
<feature type="chain" id="PRO_0000060293" description="Probable ABC transporter permease protein y4fN">
    <location>
        <begin position="1"/>
        <end position="569"/>
    </location>
</feature>
<feature type="transmembrane region" description="Helical" evidence="1">
    <location>
        <begin position="10"/>
        <end position="30"/>
    </location>
</feature>
<feature type="transmembrane region" description="Helical" evidence="1">
    <location>
        <begin position="68"/>
        <end position="88"/>
    </location>
</feature>
<feature type="transmembrane region" description="Helical" evidence="1">
    <location>
        <begin position="98"/>
        <end position="118"/>
    </location>
</feature>
<feature type="transmembrane region" description="Helical" evidence="1">
    <location>
        <begin position="121"/>
        <end position="141"/>
    </location>
</feature>
<feature type="transmembrane region" description="Helical" evidence="1">
    <location>
        <begin position="145"/>
        <end position="165"/>
    </location>
</feature>
<feature type="transmembrane region" description="Helical" evidence="1">
    <location>
        <begin position="196"/>
        <end position="216"/>
    </location>
</feature>
<feature type="transmembrane region" description="Helical" evidence="1">
    <location>
        <begin position="247"/>
        <end position="267"/>
    </location>
</feature>
<feature type="transmembrane region" description="Helical" evidence="1">
    <location>
        <begin position="304"/>
        <end position="324"/>
    </location>
</feature>
<feature type="transmembrane region" description="Helical" evidence="1">
    <location>
        <begin position="363"/>
        <end position="383"/>
    </location>
</feature>
<feature type="transmembrane region" description="Helical" evidence="1">
    <location>
        <begin position="395"/>
        <end position="415"/>
    </location>
</feature>
<feature type="transmembrane region" description="Helical" evidence="1">
    <location>
        <begin position="426"/>
        <end position="446"/>
    </location>
</feature>
<feature type="transmembrane region" description="Helical" evidence="1">
    <location>
        <begin position="480"/>
        <end position="500"/>
    </location>
</feature>
<feature type="transmembrane region" description="Helical" evidence="1">
    <location>
        <begin position="534"/>
        <end position="554"/>
    </location>
</feature>
<feature type="domain" description="ABC transmembrane type-1 1" evidence="1">
    <location>
        <begin position="64"/>
        <end position="268"/>
    </location>
</feature>
<feature type="domain" description="ABC transmembrane type-1 2" evidence="1">
    <location>
        <begin position="357"/>
        <end position="551"/>
    </location>
</feature>
<sequence>MSRSTRLDRVFYWLGLIVIAWAVLTFLLVPMLAALQAALFRLGSLAMFDAVSELARSRRVRAALWNTVWMTAATTLTVTIVGMFQVAVLEYFRVPGRGFLKIAFSTPLVFGGVVAAAGYNFTYGPSGAITAALAALFPSLPRDWFIGWFGVLFAHTFLMTSFHFLFLRAAMRRVDYSTIEAARSMGASEMTILRCVVLPVILPTVLAVTLLTLITAMGSFAAPQVLGGRDFHMLSQMVLTLNSLRRPDMAALLALLMGLVLMGLILLSQYFEAKGAYTAGAKATTRIQLRAIRNPLARIVVTALAYLLAAIYLMPVALIVLFSFAPASSIGIDVLPSSFTLANYARVLGGGAAFVPFFNSMLMSSIAVAVGLAITLFAVPIMVRKRNWLTRGLDICFVLPWIIPTMLLAVGLIVAFDAPNPLVGNLVLLGSYWLLPIGYVIFSLPLMVRFMRSAFIGIDPAFDEAARAMGASGPYRLRRVVLPLVAPTAILVAGMKFNNLLAEYPLSAFLYNVNNKPLPIAIVDGAVSADPDQAAVSLVYVTLIMAFSLAVILIAERLSLGRTPESSNL</sequence>
<accession>P55452</accession>
<organism>
    <name type="scientific">Sinorhizobium fredii (strain NBRC 101917 / NGR234)</name>
    <dbReference type="NCBI Taxonomy" id="394"/>
    <lineage>
        <taxon>Bacteria</taxon>
        <taxon>Pseudomonadati</taxon>
        <taxon>Pseudomonadota</taxon>
        <taxon>Alphaproteobacteria</taxon>
        <taxon>Hyphomicrobiales</taxon>
        <taxon>Rhizobiaceae</taxon>
        <taxon>Sinorhizobium/Ensifer group</taxon>
        <taxon>Sinorhizobium</taxon>
    </lineage>
</organism>
<name>Y4FN_SINFN</name>
<reference key="1">
    <citation type="journal article" date="1997" name="Nature">
        <title>Molecular basis of symbiosis between Rhizobium and legumes.</title>
        <authorList>
            <person name="Freiberg C.A."/>
            <person name="Fellay R."/>
            <person name="Bairoch A."/>
            <person name="Broughton W.J."/>
            <person name="Rosenthal A."/>
            <person name="Perret X."/>
        </authorList>
    </citation>
    <scope>NUCLEOTIDE SEQUENCE [LARGE SCALE GENOMIC DNA]</scope>
    <source>
        <strain>NBRC 101917 / NGR234</strain>
    </source>
</reference>
<reference key="2">
    <citation type="journal article" date="2009" name="Appl. Environ. Microbiol.">
        <title>Rhizobium sp. strain NGR234 possesses a remarkable number of secretion systems.</title>
        <authorList>
            <person name="Schmeisser C."/>
            <person name="Liesegang H."/>
            <person name="Krysciak D."/>
            <person name="Bakkou N."/>
            <person name="Le Quere A."/>
            <person name="Wollherr A."/>
            <person name="Heinemeyer I."/>
            <person name="Morgenstern B."/>
            <person name="Pommerening-Roeser A."/>
            <person name="Flores M."/>
            <person name="Palacios R."/>
            <person name="Brenner S."/>
            <person name="Gottschalk G."/>
            <person name="Schmitz R.A."/>
            <person name="Broughton W.J."/>
            <person name="Perret X."/>
            <person name="Strittmatter A.W."/>
            <person name="Streit W.R."/>
        </authorList>
    </citation>
    <scope>NUCLEOTIDE SEQUENCE [LARGE SCALE GENOMIC DNA]</scope>
    <source>
        <strain>NBRC 101917 / NGR234</strain>
    </source>
</reference>
<dbReference type="EMBL" id="U00090">
    <property type="protein sequence ID" value="AAB91670.1"/>
    <property type="molecule type" value="Genomic_DNA"/>
</dbReference>
<dbReference type="RefSeq" id="NP_443858.1">
    <property type="nucleotide sequence ID" value="NC_000914.2"/>
</dbReference>
<dbReference type="RefSeq" id="WP_010875381.1">
    <property type="nucleotide sequence ID" value="NC_000914.2"/>
</dbReference>
<dbReference type="SMR" id="P55452"/>
<dbReference type="KEGG" id="rhi:NGR_a03680"/>
<dbReference type="PATRIC" id="fig|394.7.peg.376"/>
<dbReference type="eggNOG" id="COG1178">
    <property type="taxonomic scope" value="Bacteria"/>
</dbReference>
<dbReference type="HOGENOM" id="CLU_021838_4_0_5"/>
<dbReference type="OrthoDB" id="9808399at2"/>
<dbReference type="Proteomes" id="UP000001054">
    <property type="component" value="Plasmid pNGR234a"/>
</dbReference>
<dbReference type="GO" id="GO:0005886">
    <property type="term" value="C:plasma membrane"/>
    <property type="evidence" value="ECO:0007669"/>
    <property type="project" value="UniProtKB-SubCell"/>
</dbReference>
<dbReference type="GO" id="GO:0055085">
    <property type="term" value="P:transmembrane transport"/>
    <property type="evidence" value="ECO:0007669"/>
    <property type="project" value="InterPro"/>
</dbReference>
<dbReference type="CDD" id="cd06261">
    <property type="entry name" value="TM_PBP2"/>
    <property type="match status" value="2"/>
</dbReference>
<dbReference type="Gene3D" id="1.10.3720.10">
    <property type="entry name" value="MetI-like"/>
    <property type="match status" value="2"/>
</dbReference>
<dbReference type="InterPro" id="IPR000515">
    <property type="entry name" value="MetI-like"/>
</dbReference>
<dbReference type="InterPro" id="IPR035906">
    <property type="entry name" value="MetI-like_sf"/>
</dbReference>
<dbReference type="PANTHER" id="PTHR43357">
    <property type="entry name" value="INNER MEMBRANE ABC TRANSPORTER PERMEASE PROTEIN YDCV"/>
    <property type="match status" value="1"/>
</dbReference>
<dbReference type="PANTHER" id="PTHR43357:SF4">
    <property type="entry name" value="INNER MEMBRANE ABC TRANSPORTER PERMEASE PROTEIN YDCV"/>
    <property type="match status" value="1"/>
</dbReference>
<dbReference type="Pfam" id="PF00528">
    <property type="entry name" value="BPD_transp_1"/>
    <property type="match status" value="1"/>
</dbReference>
<dbReference type="SUPFAM" id="SSF161098">
    <property type="entry name" value="MetI-like"/>
    <property type="match status" value="2"/>
</dbReference>
<dbReference type="PROSITE" id="PS50928">
    <property type="entry name" value="ABC_TM1"/>
    <property type="match status" value="2"/>
</dbReference>
<comment type="function">
    <text>Probably part of the binding-protein-dependent transport system y4fNOP. Probably responsible for the translocation of the substrate across the membrane.</text>
</comment>
<comment type="subcellular location">
    <subcellularLocation>
        <location evidence="2">Cell inner membrane</location>
        <topology evidence="1">Multi-pass membrane protein</topology>
    </subcellularLocation>
</comment>
<comment type="similarity">
    <text evidence="2">Belongs to the binding-protein-dependent transport system permease family. CysTW subfamily.</text>
</comment>
<proteinExistence type="inferred from homology"/>